<feature type="chain" id="PRO_0000324779" description="Thiol peroxidase">
    <location>
        <begin position="1"/>
        <end position="164"/>
    </location>
</feature>
<feature type="domain" description="Thioredoxin" evidence="1">
    <location>
        <begin position="17"/>
        <end position="164"/>
    </location>
</feature>
<feature type="active site" description="Cysteine sulfenic acid (-SOH) intermediate" evidence="1">
    <location>
        <position position="59"/>
    </location>
</feature>
<feature type="disulfide bond" description="Redox-active" evidence="1">
    <location>
        <begin position="59"/>
        <end position="93"/>
    </location>
</feature>
<protein>
    <recommendedName>
        <fullName evidence="1">Thiol peroxidase</fullName>
        <shortName evidence="1">Tpx</shortName>
        <ecNumber evidence="1">1.11.1.24</ecNumber>
    </recommendedName>
    <alternativeName>
        <fullName evidence="1">Peroxiredoxin tpx</fullName>
        <shortName evidence="1">Prx</shortName>
    </alternativeName>
    <alternativeName>
        <fullName evidence="1">Thioredoxin peroxidase</fullName>
    </alternativeName>
    <alternativeName>
        <fullName evidence="1">Thioredoxin-dependent peroxiredoxin</fullName>
    </alternativeName>
</protein>
<evidence type="ECO:0000255" key="1">
    <source>
        <dbReference type="HAMAP-Rule" id="MF_00269"/>
    </source>
</evidence>
<sequence length="164" mass="17924">MTVTFQNNPVSISGSFPKVGDRLPSFTLCGADLNDLNNEDFKGKKIVMSIFPSIDTPVCSKSVKVLQNALMTRSDTVLLCVSADLPFAMSRFCTEHAVANVTNASFFREPAFTERFGVNLNEGALRGLAARAVIVADEFGVITHSELVNEITNEPDYDRILMSL</sequence>
<gene>
    <name evidence="1" type="primary">tpx</name>
    <name type="synonym">tagD</name>
    <name type="ordered locus">VC0395_A0349</name>
    <name type="ordered locus">VC395_0840</name>
</gene>
<dbReference type="EC" id="1.11.1.24" evidence="1"/>
<dbReference type="EMBL" id="U02375">
    <property type="protein sequence ID" value="AAA64918.1"/>
    <property type="molecule type" value="Genomic_DNA"/>
</dbReference>
<dbReference type="EMBL" id="CP000627">
    <property type="protein sequence ID" value="ABQ20151.1"/>
    <property type="molecule type" value="Genomic_DNA"/>
</dbReference>
<dbReference type="EMBL" id="CP001235">
    <property type="protein sequence ID" value="ACP08855.1"/>
    <property type="molecule type" value="Genomic_DNA"/>
</dbReference>
<dbReference type="RefSeq" id="WP_000218963.1">
    <property type="nucleotide sequence ID" value="NZ_JAACZH010000023.1"/>
</dbReference>
<dbReference type="SMR" id="A5F3A2"/>
<dbReference type="KEGG" id="vco:VC0395_A0349"/>
<dbReference type="KEGG" id="vcr:VC395_0840"/>
<dbReference type="PATRIC" id="fig|345073.21.peg.812"/>
<dbReference type="eggNOG" id="COG2077">
    <property type="taxonomic scope" value="Bacteria"/>
</dbReference>
<dbReference type="HOGENOM" id="CLU_042529_12_2_6"/>
<dbReference type="OrthoDB" id="9781543at2"/>
<dbReference type="Proteomes" id="UP000000249">
    <property type="component" value="Chromosome 2"/>
</dbReference>
<dbReference type="GO" id="GO:0008379">
    <property type="term" value="F:thioredoxin peroxidase activity"/>
    <property type="evidence" value="ECO:0007669"/>
    <property type="project" value="UniProtKB-UniRule"/>
</dbReference>
<dbReference type="CDD" id="cd03014">
    <property type="entry name" value="PRX_Atyp2cys"/>
    <property type="match status" value="1"/>
</dbReference>
<dbReference type="Gene3D" id="3.40.30.10">
    <property type="entry name" value="Glutaredoxin"/>
    <property type="match status" value="1"/>
</dbReference>
<dbReference type="HAMAP" id="MF_00269">
    <property type="entry name" value="Tpx"/>
    <property type="match status" value="1"/>
</dbReference>
<dbReference type="InterPro" id="IPR013740">
    <property type="entry name" value="Redoxin"/>
</dbReference>
<dbReference type="InterPro" id="IPR036249">
    <property type="entry name" value="Thioredoxin-like_sf"/>
</dbReference>
<dbReference type="InterPro" id="IPR013766">
    <property type="entry name" value="Thioredoxin_domain"/>
</dbReference>
<dbReference type="InterPro" id="IPR002065">
    <property type="entry name" value="TPX"/>
</dbReference>
<dbReference type="InterPro" id="IPR018219">
    <property type="entry name" value="Tpx_CS"/>
</dbReference>
<dbReference type="InterPro" id="IPR050455">
    <property type="entry name" value="Tpx_Peroxidase_subfamily"/>
</dbReference>
<dbReference type="NCBIfam" id="NF001808">
    <property type="entry name" value="PRK00522.1"/>
    <property type="match status" value="1"/>
</dbReference>
<dbReference type="PANTHER" id="PTHR43110">
    <property type="entry name" value="THIOL PEROXIDASE"/>
    <property type="match status" value="1"/>
</dbReference>
<dbReference type="PANTHER" id="PTHR43110:SF1">
    <property type="entry name" value="THIOL PEROXIDASE"/>
    <property type="match status" value="1"/>
</dbReference>
<dbReference type="Pfam" id="PF08534">
    <property type="entry name" value="Redoxin"/>
    <property type="match status" value="1"/>
</dbReference>
<dbReference type="SUPFAM" id="SSF52833">
    <property type="entry name" value="Thioredoxin-like"/>
    <property type="match status" value="1"/>
</dbReference>
<dbReference type="PROSITE" id="PS51352">
    <property type="entry name" value="THIOREDOXIN_2"/>
    <property type="match status" value="1"/>
</dbReference>
<dbReference type="PROSITE" id="PS01265">
    <property type="entry name" value="TPX"/>
    <property type="match status" value="1"/>
</dbReference>
<name>TPX_VIBC3</name>
<keyword id="KW-0049">Antioxidant</keyword>
<keyword id="KW-1015">Disulfide bond</keyword>
<keyword id="KW-0560">Oxidoreductase</keyword>
<keyword id="KW-0575">Peroxidase</keyword>
<keyword id="KW-0676">Redox-active center</keyword>
<proteinExistence type="inferred from homology"/>
<comment type="function">
    <text evidence="1">Thiol-specific peroxidase that catalyzes the reduction of hydrogen peroxide and organic hydroperoxides to water and alcohols, respectively. Plays a role in cell protection against oxidative stress by detoxifying peroxides.</text>
</comment>
<comment type="catalytic activity">
    <reaction evidence="1">
        <text>a hydroperoxide + [thioredoxin]-dithiol = an alcohol + [thioredoxin]-disulfide + H2O</text>
        <dbReference type="Rhea" id="RHEA:62620"/>
        <dbReference type="Rhea" id="RHEA-COMP:10698"/>
        <dbReference type="Rhea" id="RHEA-COMP:10700"/>
        <dbReference type="ChEBI" id="CHEBI:15377"/>
        <dbReference type="ChEBI" id="CHEBI:29950"/>
        <dbReference type="ChEBI" id="CHEBI:30879"/>
        <dbReference type="ChEBI" id="CHEBI:35924"/>
        <dbReference type="ChEBI" id="CHEBI:50058"/>
        <dbReference type="EC" id="1.11.1.24"/>
    </reaction>
</comment>
<comment type="subunit">
    <text evidence="1">Homodimer.</text>
</comment>
<comment type="miscellaneous">
    <text evidence="1">The active site is a conserved redox-active cysteine residue, the peroxidatic cysteine (C(P)), which makes the nucleophilic attack on the peroxide substrate. The peroxide oxidizes the C(P)-SH to cysteine sulfenic acid (C(P)-SOH), which then reacts with another cysteine residue, the resolving cysteine (C(R)), to form a disulfide bridge. The disulfide is subsequently reduced by an appropriate electron donor to complete the catalytic cycle. In this atypical 2-Cys peroxiredoxin, C(R) is present in the same subunit to form an intramolecular disulfide. The disulfide is subsequently reduced by thioredoxin.</text>
</comment>
<comment type="similarity">
    <text evidence="1">Belongs to the peroxiredoxin family. Tpx subfamily.</text>
</comment>
<reference key="1">
    <citation type="journal article" date="1994" name="Gene">
        <title>Identification of a Vibrio cholerae ToxR-activated gene (tagD) that is physically linked to the toxin-coregulated pilus (tcp) gene cluster.</title>
        <authorList>
            <person name="Hughes K.J."/>
            <person name="Everiss K.D."/>
            <person name="Harkey C.W."/>
            <person name="Peterson K.M."/>
        </authorList>
    </citation>
    <scope>NUCLEOTIDE SEQUENCE [GENOMIC DNA]</scope>
</reference>
<reference key="2">
    <citation type="submission" date="2007-03" db="EMBL/GenBank/DDBJ databases">
        <authorList>
            <person name="Heidelberg J."/>
        </authorList>
    </citation>
    <scope>NUCLEOTIDE SEQUENCE [LARGE SCALE GENOMIC DNA]</scope>
    <source>
        <strain>ATCC 39541 / Classical Ogawa 395 / O395</strain>
    </source>
</reference>
<reference key="3">
    <citation type="journal article" date="2008" name="PLoS ONE">
        <title>A recalibrated molecular clock and independent origins for the cholera pandemic clones.</title>
        <authorList>
            <person name="Feng L."/>
            <person name="Reeves P.R."/>
            <person name="Lan R."/>
            <person name="Ren Y."/>
            <person name="Gao C."/>
            <person name="Zhou Z."/>
            <person name="Ren Y."/>
            <person name="Cheng J."/>
            <person name="Wang W."/>
            <person name="Wang J."/>
            <person name="Qian W."/>
            <person name="Li D."/>
            <person name="Wang L."/>
        </authorList>
    </citation>
    <scope>NUCLEOTIDE SEQUENCE [LARGE SCALE GENOMIC DNA]</scope>
    <source>
        <strain>ATCC 39541 / Classical Ogawa 395 / O395</strain>
    </source>
</reference>
<accession>A5F3A2</accession>
<accession>C3LYI9</accession>
<accession>P39167</accession>
<accession>Q9KTR6</accession>
<organism>
    <name type="scientific">Vibrio cholerae serotype O1 (strain ATCC 39541 / Classical Ogawa 395 / O395)</name>
    <dbReference type="NCBI Taxonomy" id="345073"/>
    <lineage>
        <taxon>Bacteria</taxon>
        <taxon>Pseudomonadati</taxon>
        <taxon>Pseudomonadota</taxon>
        <taxon>Gammaproteobacteria</taxon>
        <taxon>Vibrionales</taxon>
        <taxon>Vibrionaceae</taxon>
        <taxon>Vibrio</taxon>
    </lineage>
</organism>